<reference key="1">
    <citation type="journal article" date="1995" name="Nucleic Acids Res.">
        <title>Analysis of the Escherichia coli genome VI: DNA sequence of the region from 92.8 through 100 minutes.</title>
        <authorList>
            <person name="Burland V.D."/>
            <person name="Plunkett G. III"/>
            <person name="Sofia H.J."/>
            <person name="Daniels D.L."/>
            <person name="Blattner F.R."/>
        </authorList>
    </citation>
    <scope>NUCLEOTIDE SEQUENCE [LARGE SCALE GENOMIC DNA]</scope>
    <source>
        <strain>K12 / MG1655 / ATCC 47076</strain>
    </source>
</reference>
<reference key="2">
    <citation type="journal article" date="1997" name="Science">
        <title>The complete genome sequence of Escherichia coli K-12.</title>
        <authorList>
            <person name="Blattner F.R."/>
            <person name="Plunkett G. III"/>
            <person name="Bloch C.A."/>
            <person name="Perna N.T."/>
            <person name="Burland V."/>
            <person name="Riley M."/>
            <person name="Collado-Vides J."/>
            <person name="Glasner J.D."/>
            <person name="Rode C.K."/>
            <person name="Mayhew G.F."/>
            <person name="Gregor J."/>
            <person name="Davis N.W."/>
            <person name="Kirkpatrick H.A."/>
            <person name="Goeden M.A."/>
            <person name="Rose D.J."/>
            <person name="Mau B."/>
            <person name="Shao Y."/>
        </authorList>
    </citation>
    <scope>NUCLEOTIDE SEQUENCE [LARGE SCALE GENOMIC DNA]</scope>
    <source>
        <strain>K12 / MG1655 / ATCC 47076</strain>
    </source>
</reference>
<reference key="3">
    <citation type="journal article" date="2006" name="Mol. Syst. Biol.">
        <title>Highly accurate genome sequences of Escherichia coli K-12 strains MG1655 and W3110.</title>
        <authorList>
            <person name="Hayashi K."/>
            <person name="Morooka N."/>
            <person name="Yamamoto Y."/>
            <person name="Fujita K."/>
            <person name="Isono K."/>
            <person name="Choi S."/>
            <person name="Ohtsubo E."/>
            <person name="Baba T."/>
            <person name="Wanner B.L."/>
            <person name="Mori H."/>
            <person name="Horiuchi T."/>
        </authorList>
    </citation>
    <scope>NUCLEOTIDE SEQUENCE [LARGE SCALE GENOMIC DNA]</scope>
    <source>
        <strain>K12 / W3110 / ATCC 27325 / DSM 5911</strain>
    </source>
</reference>
<protein>
    <recommendedName>
        <fullName>Uncharacterized protein YjiS</fullName>
    </recommendedName>
</protein>
<name>YJIS_ECOLI</name>
<keyword id="KW-1185">Reference proteome</keyword>
<feature type="chain" id="PRO_0000169796" description="Uncharacterized protein YjiS">
    <location>
        <begin position="1"/>
        <end position="54"/>
    </location>
</feature>
<gene>
    <name type="primary">yjiS</name>
    <name type="ordered locus">b4341</name>
    <name type="ordered locus">JW4304</name>
</gene>
<accession>P39390</accession>
<accession>Q2M5X3</accession>
<sequence length="54" mass="6709">MEFHENRAKAPFIGLVQLWQAVRRWRRQMQTRRVLQQMSDERLKDIGLRREDVE</sequence>
<organism>
    <name type="scientific">Escherichia coli (strain K12)</name>
    <dbReference type="NCBI Taxonomy" id="83333"/>
    <lineage>
        <taxon>Bacteria</taxon>
        <taxon>Pseudomonadati</taxon>
        <taxon>Pseudomonadota</taxon>
        <taxon>Gammaproteobacteria</taxon>
        <taxon>Enterobacterales</taxon>
        <taxon>Enterobacteriaceae</taxon>
        <taxon>Escherichia</taxon>
    </lineage>
</organism>
<dbReference type="EMBL" id="U14003">
    <property type="protein sequence ID" value="AAA97237.1"/>
    <property type="molecule type" value="Genomic_DNA"/>
</dbReference>
<dbReference type="EMBL" id="U00096">
    <property type="protein sequence ID" value="AAC77297.1"/>
    <property type="molecule type" value="Genomic_DNA"/>
</dbReference>
<dbReference type="EMBL" id="AP009048">
    <property type="protein sequence ID" value="BAE78333.1"/>
    <property type="molecule type" value="Genomic_DNA"/>
</dbReference>
<dbReference type="PIR" id="S56566">
    <property type="entry name" value="S56566"/>
</dbReference>
<dbReference type="RefSeq" id="NP_418761.1">
    <property type="nucleotide sequence ID" value="NC_000913.3"/>
</dbReference>
<dbReference type="RefSeq" id="WP_000394280.1">
    <property type="nucleotide sequence ID" value="NZ_LN832404.1"/>
</dbReference>
<dbReference type="SMR" id="P39390"/>
<dbReference type="BioGRID" id="4262761">
    <property type="interactions" value="7"/>
</dbReference>
<dbReference type="FunCoup" id="P39390">
    <property type="interactions" value="459"/>
</dbReference>
<dbReference type="STRING" id="511145.b4341"/>
<dbReference type="PaxDb" id="511145-b4341"/>
<dbReference type="EnsemblBacteria" id="AAC77297">
    <property type="protein sequence ID" value="AAC77297"/>
    <property type="gene ID" value="b4341"/>
</dbReference>
<dbReference type="GeneID" id="948903"/>
<dbReference type="KEGG" id="ecj:JW4304"/>
<dbReference type="KEGG" id="eco:b4341"/>
<dbReference type="KEGG" id="ecoc:C3026_23460"/>
<dbReference type="PATRIC" id="fig|511145.12.peg.4488"/>
<dbReference type="EchoBASE" id="EB2467"/>
<dbReference type="eggNOG" id="COG5457">
    <property type="taxonomic scope" value="Bacteria"/>
</dbReference>
<dbReference type="HOGENOM" id="CLU_201670_0_0_6"/>
<dbReference type="InParanoid" id="P39390"/>
<dbReference type="OMA" id="YRINRTR"/>
<dbReference type="PhylomeDB" id="P39390"/>
<dbReference type="BioCyc" id="EcoCyc:G7937-MONOMER"/>
<dbReference type="PRO" id="PR:P39390"/>
<dbReference type="Proteomes" id="UP000000625">
    <property type="component" value="Chromosome"/>
</dbReference>
<dbReference type="InterPro" id="IPR009506">
    <property type="entry name" value="DUF1127"/>
</dbReference>
<dbReference type="Pfam" id="PF06568">
    <property type="entry name" value="DUF1127"/>
    <property type="match status" value="1"/>
</dbReference>
<proteinExistence type="predicted"/>